<sequence>MEVAAKLKYARISAQKARLVADQVRGLGAEQAVNLLRFSNKKAAALMKKVLNSAIANAEHNEGADIDELKVSTVMVDEGPSARRFHARARGRANQILKRTCHITVKVSDSQVEND</sequence>
<gene>
    <name evidence="1" type="primary">rplV</name>
    <name type="ordered locus">CbuK_0438</name>
</gene>
<protein>
    <recommendedName>
        <fullName evidence="1">Large ribosomal subunit protein uL22</fullName>
    </recommendedName>
    <alternativeName>
        <fullName evidence="2">50S ribosomal protein L22</fullName>
    </alternativeName>
</protein>
<feature type="chain" id="PRO_1000142247" description="Large ribosomal subunit protein uL22">
    <location>
        <begin position="1"/>
        <end position="115"/>
    </location>
</feature>
<accession>B6J5D7</accession>
<proteinExistence type="inferred from homology"/>
<evidence type="ECO:0000255" key="1">
    <source>
        <dbReference type="HAMAP-Rule" id="MF_01331"/>
    </source>
</evidence>
<evidence type="ECO:0000305" key="2"/>
<comment type="function">
    <text evidence="1">This protein binds specifically to 23S rRNA; its binding is stimulated by other ribosomal proteins, e.g. L4, L17, and L20. It is important during the early stages of 50S assembly. It makes multiple contacts with different domains of the 23S rRNA in the assembled 50S subunit and ribosome (By similarity).</text>
</comment>
<comment type="function">
    <text evidence="1">The globular domain of the protein is located near the polypeptide exit tunnel on the outside of the subunit, while an extended beta-hairpin is found that lines the wall of the exit tunnel in the center of the 70S ribosome.</text>
</comment>
<comment type="subunit">
    <text evidence="1">Part of the 50S ribosomal subunit.</text>
</comment>
<comment type="similarity">
    <text evidence="1">Belongs to the universal ribosomal protein uL22 family.</text>
</comment>
<name>RL22_COXB1</name>
<organism>
    <name type="scientific">Coxiella burnetii (strain CbuK_Q154)</name>
    <name type="common">Coxiella burnetii (strain Q154)</name>
    <dbReference type="NCBI Taxonomy" id="434924"/>
    <lineage>
        <taxon>Bacteria</taxon>
        <taxon>Pseudomonadati</taxon>
        <taxon>Pseudomonadota</taxon>
        <taxon>Gammaproteobacteria</taxon>
        <taxon>Legionellales</taxon>
        <taxon>Coxiellaceae</taxon>
        <taxon>Coxiella</taxon>
    </lineage>
</organism>
<reference key="1">
    <citation type="journal article" date="2009" name="Infect. Immun.">
        <title>Comparative genomics reveal extensive transposon-mediated genomic plasticity and diversity among potential effector proteins within the genus Coxiella.</title>
        <authorList>
            <person name="Beare P.A."/>
            <person name="Unsworth N."/>
            <person name="Andoh M."/>
            <person name="Voth D.E."/>
            <person name="Omsland A."/>
            <person name="Gilk S.D."/>
            <person name="Williams K.P."/>
            <person name="Sobral B.W."/>
            <person name="Kupko J.J. III"/>
            <person name="Porcella S.F."/>
            <person name="Samuel J.E."/>
            <person name="Heinzen R.A."/>
        </authorList>
    </citation>
    <scope>NUCLEOTIDE SEQUENCE [LARGE SCALE GENOMIC DNA]</scope>
    <source>
        <strain>CbuK_Q154</strain>
    </source>
</reference>
<keyword id="KW-0687">Ribonucleoprotein</keyword>
<keyword id="KW-0689">Ribosomal protein</keyword>
<keyword id="KW-0694">RNA-binding</keyword>
<keyword id="KW-0699">rRNA-binding</keyword>
<dbReference type="EMBL" id="CP001020">
    <property type="protein sequence ID" value="ACJ19721.1"/>
    <property type="molecule type" value="Genomic_DNA"/>
</dbReference>
<dbReference type="RefSeq" id="WP_005771536.1">
    <property type="nucleotide sequence ID" value="NC_011528.1"/>
</dbReference>
<dbReference type="SMR" id="B6J5D7"/>
<dbReference type="KEGG" id="cbc:CbuK_0438"/>
<dbReference type="HOGENOM" id="CLU_083987_3_3_6"/>
<dbReference type="GO" id="GO:0022625">
    <property type="term" value="C:cytosolic large ribosomal subunit"/>
    <property type="evidence" value="ECO:0007669"/>
    <property type="project" value="TreeGrafter"/>
</dbReference>
<dbReference type="GO" id="GO:0019843">
    <property type="term" value="F:rRNA binding"/>
    <property type="evidence" value="ECO:0007669"/>
    <property type="project" value="UniProtKB-UniRule"/>
</dbReference>
<dbReference type="GO" id="GO:0003735">
    <property type="term" value="F:structural constituent of ribosome"/>
    <property type="evidence" value="ECO:0007669"/>
    <property type="project" value="InterPro"/>
</dbReference>
<dbReference type="GO" id="GO:0006412">
    <property type="term" value="P:translation"/>
    <property type="evidence" value="ECO:0007669"/>
    <property type="project" value="UniProtKB-UniRule"/>
</dbReference>
<dbReference type="CDD" id="cd00336">
    <property type="entry name" value="Ribosomal_L22"/>
    <property type="match status" value="1"/>
</dbReference>
<dbReference type="FunFam" id="3.90.470.10:FF:000001">
    <property type="entry name" value="50S ribosomal protein L22"/>
    <property type="match status" value="1"/>
</dbReference>
<dbReference type="Gene3D" id="3.90.470.10">
    <property type="entry name" value="Ribosomal protein L22/L17"/>
    <property type="match status" value="1"/>
</dbReference>
<dbReference type="HAMAP" id="MF_01331_B">
    <property type="entry name" value="Ribosomal_uL22_B"/>
    <property type="match status" value="1"/>
</dbReference>
<dbReference type="InterPro" id="IPR001063">
    <property type="entry name" value="Ribosomal_uL22"/>
</dbReference>
<dbReference type="InterPro" id="IPR005727">
    <property type="entry name" value="Ribosomal_uL22_bac/chlpt-type"/>
</dbReference>
<dbReference type="InterPro" id="IPR047867">
    <property type="entry name" value="Ribosomal_uL22_bac/org-type"/>
</dbReference>
<dbReference type="InterPro" id="IPR018260">
    <property type="entry name" value="Ribosomal_uL22_CS"/>
</dbReference>
<dbReference type="InterPro" id="IPR036394">
    <property type="entry name" value="Ribosomal_uL22_sf"/>
</dbReference>
<dbReference type="NCBIfam" id="TIGR01044">
    <property type="entry name" value="rplV_bact"/>
    <property type="match status" value="1"/>
</dbReference>
<dbReference type="PANTHER" id="PTHR13501">
    <property type="entry name" value="CHLOROPLAST 50S RIBOSOMAL PROTEIN L22-RELATED"/>
    <property type="match status" value="1"/>
</dbReference>
<dbReference type="PANTHER" id="PTHR13501:SF8">
    <property type="entry name" value="LARGE RIBOSOMAL SUBUNIT PROTEIN UL22M"/>
    <property type="match status" value="1"/>
</dbReference>
<dbReference type="Pfam" id="PF00237">
    <property type="entry name" value="Ribosomal_L22"/>
    <property type="match status" value="1"/>
</dbReference>
<dbReference type="SUPFAM" id="SSF54843">
    <property type="entry name" value="Ribosomal protein L22"/>
    <property type="match status" value="1"/>
</dbReference>
<dbReference type="PROSITE" id="PS00464">
    <property type="entry name" value="RIBOSOMAL_L22"/>
    <property type="match status" value="1"/>
</dbReference>